<accession>Q9S7M9</accession>
<accession>Q8L987</accession>
<gene>
    <name type="ordered locus">At3g07680</name>
    <name type="ORF">F17A17.2</name>
    <name type="ORF">MLP3.13</name>
</gene>
<dbReference type="EMBL" id="AC009176">
    <property type="protein sequence ID" value="AAF13086.1"/>
    <property type="molecule type" value="Genomic_DNA"/>
</dbReference>
<dbReference type="EMBL" id="AC013483">
    <property type="protein sequence ID" value="AAF21178.1"/>
    <property type="molecule type" value="Genomic_DNA"/>
</dbReference>
<dbReference type="EMBL" id="CP002686">
    <property type="protein sequence ID" value="AEE74586.1"/>
    <property type="molecule type" value="Genomic_DNA"/>
</dbReference>
<dbReference type="EMBL" id="AF360268">
    <property type="protein sequence ID" value="AAK25978.1"/>
    <property type="molecule type" value="mRNA"/>
</dbReference>
<dbReference type="EMBL" id="AY040079">
    <property type="protein sequence ID" value="AAK64137.1"/>
    <property type="molecule type" value="mRNA"/>
</dbReference>
<dbReference type="EMBL" id="AY088581">
    <property type="protein sequence ID" value="AAM66112.1"/>
    <property type="molecule type" value="mRNA"/>
</dbReference>
<dbReference type="RefSeq" id="NP_187425.1">
    <property type="nucleotide sequence ID" value="NM_111647.5"/>
</dbReference>
<dbReference type="SMR" id="Q9S7M9"/>
<dbReference type="BioGRID" id="5294">
    <property type="interactions" value="27"/>
</dbReference>
<dbReference type="FunCoup" id="Q9S7M9">
    <property type="interactions" value="3863"/>
</dbReference>
<dbReference type="IntAct" id="Q9S7M9">
    <property type="interactions" value="25"/>
</dbReference>
<dbReference type="STRING" id="3702.Q9S7M9"/>
<dbReference type="GlyGen" id="Q9S7M9">
    <property type="glycosylation" value="1 site"/>
</dbReference>
<dbReference type="PaxDb" id="3702-AT3G07680.1"/>
<dbReference type="ProteomicsDB" id="248858"/>
<dbReference type="DNASU" id="819959"/>
<dbReference type="EnsemblPlants" id="AT3G07680.1">
    <property type="protein sequence ID" value="AT3G07680.1"/>
    <property type="gene ID" value="AT3G07680"/>
</dbReference>
<dbReference type="GeneID" id="819959"/>
<dbReference type="Gramene" id="AT3G07680.1">
    <property type="protein sequence ID" value="AT3G07680.1"/>
    <property type="gene ID" value="AT3G07680"/>
</dbReference>
<dbReference type="KEGG" id="ath:AT3G07680"/>
<dbReference type="Araport" id="AT3G07680"/>
<dbReference type="TAIR" id="AT3G07680">
    <property type="gene designation" value="P24BETA2"/>
</dbReference>
<dbReference type="eggNOG" id="KOG1692">
    <property type="taxonomic scope" value="Eukaryota"/>
</dbReference>
<dbReference type="HOGENOM" id="CLU_066963_1_1_1"/>
<dbReference type="InParanoid" id="Q9S7M9"/>
<dbReference type="OMA" id="HFDPLMQ"/>
<dbReference type="PhylomeDB" id="Q9S7M9"/>
<dbReference type="PRO" id="PR:Q9S7M9"/>
<dbReference type="Proteomes" id="UP000006548">
    <property type="component" value="Chromosome 3"/>
</dbReference>
<dbReference type="ExpressionAtlas" id="Q9S7M9">
    <property type="expression patterns" value="baseline and differential"/>
</dbReference>
<dbReference type="GO" id="GO:0030134">
    <property type="term" value="C:COPII-coated ER to Golgi transport vesicle"/>
    <property type="evidence" value="ECO:0000314"/>
    <property type="project" value="TAIR"/>
</dbReference>
<dbReference type="GO" id="GO:0005783">
    <property type="term" value="C:endoplasmic reticulum"/>
    <property type="evidence" value="ECO:0007005"/>
    <property type="project" value="TAIR"/>
</dbReference>
<dbReference type="GO" id="GO:0005789">
    <property type="term" value="C:endoplasmic reticulum membrane"/>
    <property type="evidence" value="ECO:0000314"/>
    <property type="project" value="TAIR"/>
</dbReference>
<dbReference type="GO" id="GO:0005794">
    <property type="term" value="C:Golgi apparatus"/>
    <property type="evidence" value="ECO:0000314"/>
    <property type="project" value="TAIR"/>
</dbReference>
<dbReference type="GO" id="GO:0032580">
    <property type="term" value="C:Golgi cisterna membrane"/>
    <property type="evidence" value="ECO:0007669"/>
    <property type="project" value="UniProtKB-SubCell"/>
</dbReference>
<dbReference type="GO" id="GO:0015031">
    <property type="term" value="P:protein transport"/>
    <property type="evidence" value="ECO:0007669"/>
    <property type="project" value="UniProtKB-KW"/>
</dbReference>
<dbReference type="GO" id="GO:0016192">
    <property type="term" value="P:vesicle-mediated transport"/>
    <property type="evidence" value="ECO:0007669"/>
    <property type="project" value="UniProtKB-KW"/>
</dbReference>
<dbReference type="InterPro" id="IPR015720">
    <property type="entry name" value="Emp24-like"/>
</dbReference>
<dbReference type="InterPro" id="IPR009038">
    <property type="entry name" value="GOLD_dom"/>
</dbReference>
<dbReference type="InterPro" id="IPR036598">
    <property type="entry name" value="GOLD_dom_sf"/>
</dbReference>
<dbReference type="PANTHER" id="PTHR22811">
    <property type="entry name" value="TRANSMEMBRANE EMP24 DOMAIN-CONTAINING PROTEIN"/>
    <property type="match status" value="1"/>
</dbReference>
<dbReference type="Pfam" id="PF01105">
    <property type="entry name" value="EMP24_GP25L"/>
    <property type="match status" value="1"/>
</dbReference>
<dbReference type="SMART" id="SM01190">
    <property type="entry name" value="EMP24_GP25L"/>
    <property type="match status" value="1"/>
</dbReference>
<dbReference type="SUPFAM" id="SSF101576">
    <property type="entry name" value="Supernatant protein factor (SPF), C-terminal domain"/>
    <property type="match status" value="1"/>
</dbReference>
<dbReference type="PROSITE" id="PS50866">
    <property type="entry name" value="GOLD"/>
    <property type="match status" value="1"/>
</dbReference>
<name>P24B2_ARATH</name>
<evidence type="ECO:0000250" key="1"/>
<evidence type="ECO:0000255" key="2"/>
<evidence type="ECO:0000255" key="3">
    <source>
        <dbReference type="PROSITE-ProRule" id="PRU00096"/>
    </source>
</evidence>
<evidence type="ECO:0000269" key="4">
    <source>
    </source>
</evidence>
<evidence type="ECO:0000269" key="5">
    <source>
    </source>
</evidence>
<evidence type="ECO:0000305" key="6"/>
<comment type="function">
    <text evidence="1 5">Involved in vesicular protein trafficking. Mainly functions in the early secretory pathway but also in post-Golgi membranes. Thought to act as cargo receptor at the lumenal side for incorporation of secretory cargo molecules into transport vesicles and to be involved in vesicle coat formation at the cytoplasmic side (By similarity). Interacts with p24delta5 at endoplasmic reticulum export sites for endoplasmic reticulum exit and coupled transport to the Golgi apparatus.</text>
</comment>
<comment type="subunit">
    <text evidence="1 5">Probably oligomerizes with other members of the EMP24/GP25L family (By similarity). Associates with the COPI vesicle coat (coatomer) (By similarity). Associates with the COPII vesicle coat (coatomer) (By similarity). Interacts with p24delta5.</text>
</comment>
<comment type="subcellular location">
    <subcellularLocation>
        <location>Golgi apparatus</location>
        <location>cis-Golgi network membrane</location>
        <topology>Single-pass type I membrane protein</topology>
    </subcellularLocation>
    <subcellularLocation>
        <location>Golgi apparatus</location>
        <location>Golgi stack membrane</location>
        <topology>Single-pass type I membrane protein</topology>
    </subcellularLocation>
    <text>Cycles between the endoplasmic reticulum and Golgi via COPI and COPII dependent pathways.</text>
</comment>
<comment type="domain">
    <text evidence="4">The cytoplasmic C-terminal domain contains an Arg-Val motif, which is involved in the anterograde ER-to-Golgi transport of the protein.</text>
</comment>
<comment type="similarity">
    <text evidence="6">Belongs to the EMP24/GP25L family.</text>
</comment>
<organism>
    <name type="scientific">Arabidopsis thaliana</name>
    <name type="common">Mouse-ear cress</name>
    <dbReference type="NCBI Taxonomy" id="3702"/>
    <lineage>
        <taxon>Eukaryota</taxon>
        <taxon>Viridiplantae</taxon>
        <taxon>Streptophyta</taxon>
        <taxon>Embryophyta</taxon>
        <taxon>Tracheophyta</taxon>
        <taxon>Spermatophyta</taxon>
        <taxon>Magnoliopsida</taxon>
        <taxon>eudicotyledons</taxon>
        <taxon>Gunneridae</taxon>
        <taxon>Pentapetalae</taxon>
        <taxon>rosids</taxon>
        <taxon>malvids</taxon>
        <taxon>Brassicales</taxon>
        <taxon>Brassicaceae</taxon>
        <taxon>Camelineae</taxon>
        <taxon>Arabidopsis</taxon>
    </lineage>
</organism>
<proteinExistence type="evidence at protein level"/>
<sequence length="208" mass="24331">MSLKGTIVLLGLLWSFQATLGIRFVIDREECFSHKAEYEGDTLHVSFVVIKSDSQWHFNEDGVDLVIHGPTGEQIHDFREQISAKHDFVVQKKGVYRFCFTNKSPYHETIDFDVQLGHFAYYDQHAKDEHFTPLMEQISKLEEALYNIQFEQHWLEAQTDRQAIVNENMSKRAVHKALFESFALIGASFLQVYLLRRLFERKLGMSRV</sequence>
<reference key="1">
    <citation type="journal article" date="2000" name="Nature">
        <title>Sequence and analysis of chromosome 3 of the plant Arabidopsis thaliana.</title>
        <authorList>
            <person name="Salanoubat M."/>
            <person name="Lemcke K."/>
            <person name="Rieger M."/>
            <person name="Ansorge W."/>
            <person name="Unseld M."/>
            <person name="Fartmann B."/>
            <person name="Valle G."/>
            <person name="Bloecker H."/>
            <person name="Perez-Alonso M."/>
            <person name="Obermaier B."/>
            <person name="Delseny M."/>
            <person name="Boutry M."/>
            <person name="Grivell L.A."/>
            <person name="Mache R."/>
            <person name="Puigdomenech P."/>
            <person name="De Simone V."/>
            <person name="Choisne N."/>
            <person name="Artiguenave F."/>
            <person name="Robert C."/>
            <person name="Brottier P."/>
            <person name="Wincker P."/>
            <person name="Cattolico L."/>
            <person name="Weissenbach J."/>
            <person name="Saurin W."/>
            <person name="Quetier F."/>
            <person name="Schaefer M."/>
            <person name="Mueller-Auer S."/>
            <person name="Gabel C."/>
            <person name="Fuchs M."/>
            <person name="Benes V."/>
            <person name="Wurmbach E."/>
            <person name="Drzonek H."/>
            <person name="Erfle H."/>
            <person name="Jordan N."/>
            <person name="Bangert S."/>
            <person name="Wiedelmann R."/>
            <person name="Kranz H."/>
            <person name="Voss H."/>
            <person name="Holland R."/>
            <person name="Brandt P."/>
            <person name="Nyakatura G."/>
            <person name="Vezzi A."/>
            <person name="D'Angelo M."/>
            <person name="Pallavicini A."/>
            <person name="Toppo S."/>
            <person name="Simionati B."/>
            <person name="Conrad A."/>
            <person name="Hornischer K."/>
            <person name="Kauer G."/>
            <person name="Loehnert T.-H."/>
            <person name="Nordsiek G."/>
            <person name="Reichelt J."/>
            <person name="Scharfe M."/>
            <person name="Schoen O."/>
            <person name="Bargues M."/>
            <person name="Terol J."/>
            <person name="Climent J."/>
            <person name="Navarro P."/>
            <person name="Collado C."/>
            <person name="Perez-Perez A."/>
            <person name="Ottenwaelder B."/>
            <person name="Duchemin D."/>
            <person name="Cooke R."/>
            <person name="Laudie M."/>
            <person name="Berger-Llauro C."/>
            <person name="Purnelle B."/>
            <person name="Masuy D."/>
            <person name="de Haan M."/>
            <person name="Maarse A.C."/>
            <person name="Alcaraz J.-P."/>
            <person name="Cottet A."/>
            <person name="Casacuberta E."/>
            <person name="Monfort A."/>
            <person name="Argiriou A."/>
            <person name="Flores M."/>
            <person name="Liguori R."/>
            <person name="Vitale D."/>
            <person name="Mannhaupt G."/>
            <person name="Haase D."/>
            <person name="Schoof H."/>
            <person name="Rudd S."/>
            <person name="Zaccaria P."/>
            <person name="Mewes H.-W."/>
            <person name="Mayer K.F.X."/>
            <person name="Kaul S."/>
            <person name="Town C.D."/>
            <person name="Koo H.L."/>
            <person name="Tallon L.J."/>
            <person name="Jenkins J."/>
            <person name="Rooney T."/>
            <person name="Rizzo M."/>
            <person name="Walts A."/>
            <person name="Utterback T."/>
            <person name="Fujii C.Y."/>
            <person name="Shea T.P."/>
            <person name="Creasy T.H."/>
            <person name="Haas B."/>
            <person name="Maiti R."/>
            <person name="Wu D."/>
            <person name="Peterson J."/>
            <person name="Van Aken S."/>
            <person name="Pai G."/>
            <person name="Militscher J."/>
            <person name="Sellers P."/>
            <person name="Gill J.E."/>
            <person name="Feldblyum T.V."/>
            <person name="Preuss D."/>
            <person name="Lin X."/>
            <person name="Nierman W.C."/>
            <person name="Salzberg S.L."/>
            <person name="White O."/>
            <person name="Venter J.C."/>
            <person name="Fraser C.M."/>
            <person name="Kaneko T."/>
            <person name="Nakamura Y."/>
            <person name="Sato S."/>
            <person name="Kato T."/>
            <person name="Asamizu E."/>
            <person name="Sasamoto S."/>
            <person name="Kimura T."/>
            <person name="Idesawa K."/>
            <person name="Kawashima K."/>
            <person name="Kishida Y."/>
            <person name="Kiyokawa C."/>
            <person name="Kohara M."/>
            <person name="Matsumoto M."/>
            <person name="Matsuno A."/>
            <person name="Muraki A."/>
            <person name="Nakayama S."/>
            <person name="Nakazaki N."/>
            <person name="Shinpo S."/>
            <person name="Takeuchi C."/>
            <person name="Wada T."/>
            <person name="Watanabe A."/>
            <person name="Yamada M."/>
            <person name="Yasuda M."/>
            <person name="Tabata S."/>
        </authorList>
    </citation>
    <scope>NUCLEOTIDE SEQUENCE [LARGE SCALE GENOMIC DNA]</scope>
    <source>
        <strain>cv. Columbia</strain>
    </source>
</reference>
<reference key="2">
    <citation type="journal article" date="2017" name="Plant J.">
        <title>Araport11: a complete reannotation of the Arabidopsis thaliana reference genome.</title>
        <authorList>
            <person name="Cheng C.Y."/>
            <person name="Krishnakumar V."/>
            <person name="Chan A.P."/>
            <person name="Thibaud-Nissen F."/>
            <person name="Schobel S."/>
            <person name="Town C.D."/>
        </authorList>
    </citation>
    <scope>GENOME REANNOTATION</scope>
    <source>
        <strain>cv. Columbia</strain>
    </source>
</reference>
<reference key="3">
    <citation type="journal article" date="2003" name="Science">
        <title>Empirical analysis of transcriptional activity in the Arabidopsis genome.</title>
        <authorList>
            <person name="Yamada K."/>
            <person name="Lim J."/>
            <person name="Dale J.M."/>
            <person name="Chen H."/>
            <person name="Shinn P."/>
            <person name="Palm C.J."/>
            <person name="Southwick A.M."/>
            <person name="Wu H.C."/>
            <person name="Kim C.J."/>
            <person name="Nguyen M."/>
            <person name="Pham P.K."/>
            <person name="Cheuk R.F."/>
            <person name="Karlin-Newmann G."/>
            <person name="Liu S.X."/>
            <person name="Lam B."/>
            <person name="Sakano H."/>
            <person name="Wu T."/>
            <person name="Yu G."/>
            <person name="Miranda M."/>
            <person name="Quach H.L."/>
            <person name="Tripp M."/>
            <person name="Chang C.H."/>
            <person name="Lee J.M."/>
            <person name="Toriumi M.J."/>
            <person name="Chan M.M."/>
            <person name="Tang C.C."/>
            <person name="Onodera C.S."/>
            <person name="Deng J.M."/>
            <person name="Akiyama K."/>
            <person name="Ansari Y."/>
            <person name="Arakawa T."/>
            <person name="Banh J."/>
            <person name="Banno F."/>
            <person name="Bowser L."/>
            <person name="Brooks S.Y."/>
            <person name="Carninci P."/>
            <person name="Chao Q."/>
            <person name="Choy N."/>
            <person name="Enju A."/>
            <person name="Goldsmith A.D."/>
            <person name="Gurjal M."/>
            <person name="Hansen N.F."/>
            <person name="Hayashizaki Y."/>
            <person name="Johnson-Hopson C."/>
            <person name="Hsuan V.W."/>
            <person name="Iida K."/>
            <person name="Karnes M."/>
            <person name="Khan S."/>
            <person name="Koesema E."/>
            <person name="Ishida J."/>
            <person name="Jiang P.X."/>
            <person name="Jones T."/>
            <person name="Kawai J."/>
            <person name="Kamiya A."/>
            <person name="Meyers C."/>
            <person name="Nakajima M."/>
            <person name="Narusaka M."/>
            <person name="Seki M."/>
            <person name="Sakurai T."/>
            <person name="Satou M."/>
            <person name="Tamse R."/>
            <person name="Vaysberg M."/>
            <person name="Wallender E.K."/>
            <person name="Wong C."/>
            <person name="Yamamura Y."/>
            <person name="Yuan S."/>
            <person name="Shinozaki K."/>
            <person name="Davis R.W."/>
            <person name="Theologis A."/>
            <person name="Ecker J.R."/>
        </authorList>
    </citation>
    <scope>NUCLEOTIDE SEQUENCE [LARGE SCALE MRNA]</scope>
    <source>
        <strain>cv. Columbia</strain>
    </source>
</reference>
<reference key="4">
    <citation type="submission" date="2002-03" db="EMBL/GenBank/DDBJ databases">
        <title>Full-length cDNA from Arabidopsis thaliana.</title>
        <authorList>
            <person name="Brover V.V."/>
            <person name="Troukhan M.E."/>
            <person name="Alexandrov N.A."/>
            <person name="Lu Y.-P."/>
            <person name="Flavell R.B."/>
            <person name="Feldmann K.A."/>
        </authorList>
    </citation>
    <scope>NUCLEOTIDE SEQUENCE [LARGE SCALE MRNA]</scope>
</reference>
<reference key="5">
    <citation type="journal article" date="2012" name="J. Exp. Bot.">
        <title>Coupled transport of Arabidopsis p24 proteins at the ER-Golgi interface.</title>
        <authorList>
            <person name="Montesinos J.C."/>
            <person name="Sturm S."/>
            <person name="Langhans M."/>
            <person name="Hillmer S."/>
            <person name="Marcote M.J."/>
            <person name="Robinson D.G."/>
            <person name="Aniento F."/>
        </authorList>
    </citation>
    <scope>GENE FAMILY</scope>
    <scope>NOMENCLATURE</scope>
    <scope>SUBCELLULAR LOCATION</scope>
    <scope>INTERACTION WITH P24DELTA5</scope>
    <scope>FUNCTION</scope>
</reference>
<reference key="6">
    <citation type="journal article" date="2012" name="Traffic">
        <title>Subclass-specific localization and trafficking of Arabidopsis p24 proteins in the ER-Golgi interface.</title>
        <authorList>
            <person name="Chen J."/>
            <person name="Qi X."/>
            <person name="Zheng H."/>
        </authorList>
    </citation>
    <scope>GENE FAMILY</scope>
    <scope>SUBCELLULAR LOCATION</scope>
    <scope>COILED-COIL DOMAIN</scope>
    <scope>DOMAIN</scope>
    <scope>MUTAGENESIS OF 199-PHE--VAL-208 AND ARG-207</scope>
</reference>
<protein>
    <recommendedName>
        <fullName>Transmembrane emp24 domain-containing protein p24beta2</fullName>
    </recommendedName>
    <alternativeName>
        <fullName>p24 family protein beta1</fullName>
        <shortName>p24beta1</shortName>
    </alternativeName>
    <alternativeName>
        <fullName>p24 family protein beta2</fullName>
        <shortName>p24beta2</shortName>
    </alternativeName>
</protein>
<keyword id="KW-0175">Coiled coil</keyword>
<keyword id="KW-0931">ER-Golgi transport</keyword>
<keyword id="KW-0325">Glycoprotein</keyword>
<keyword id="KW-0333">Golgi apparatus</keyword>
<keyword id="KW-0472">Membrane</keyword>
<keyword id="KW-0653">Protein transport</keyword>
<keyword id="KW-1185">Reference proteome</keyword>
<keyword id="KW-0732">Signal</keyword>
<keyword id="KW-0812">Transmembrane</keyword>
<keyword id="KW-1133">Transmembrane helix</keyword>
<keyword id="KW-0813">Transport</keyword>
<feature type="signal peptide" evidence="2">
    <location>
        <begin position="1"/>
        <end position="21"/>
    </location>
</feature>
<feature type="chain" id="PRO_0000419792" description="Transmembrane emp24 domain-containing protein p24beta2">
    <location>
        <begin position="22"/>
        <end position="208"/>
    </location>
</feature>
<feature type="topological domain" description="Lumenal" evidence="2">
    <location>
        <begin position="22"/>
        <end position="176"/>
    </location>
</feature>
<feature type="transmembrane region" description="Helical" evidence="2">
    <location>
        <begin position="177"/>
        <end position="195"/>
    </location>
</feature>
<feature type="topological domain" description="Cytoplasmic" evidence="2">
    <location>
        <begin position="196"/>
        <end position="208"/>
    </location>
</feature>
<feature type="domain" description="GOLD" evidence="3">
    <location>
        <begin position="29"/>
        <end position="116"/>
    </location>
</feature>
<feature type="coiled-coil region" evidence="2">
    <location>
        <begin position="134"/>
        <end position="149"/>
    </location>
</feature>
<feature type="short sequence motif" description="COPI vesicle coat-binding" evidence="2">
    <location>
        <begin position="198"/>
        <end position="208"/>
    </location>
</feature>
<feature type="short sequence motif" description="COPII vesicle coat-binding" evidence="2">
    <location>
        <begin position="198"/>
        <end position="199"/>
    </location>
</feature>
<feature type="short sequence motif" description="Required for the export from the endoplasmic reticulum to the Golgi">
    <location>
        <begin position="207"/>
        <end position="208"/>
    </location>
</feature>
<feature type="glycosylation site" description="N-linked (GlcNAc...) asparagine" evidence="2">
    <location>
        <position position="168"/>
    </location>
</feature>
<feature type="mutagenesis site" description="Abolishes the export from the endoplasmic reticulum to the Golgi." evidence="4">
    <location>
        <begin position="199"/>
        <end position="208"/>
    </location>
</feature>
<feature type="mutagenesis site" description="Abolishes the export from the endoplasmic reticulum to the Golgi." evidence="4">
    <original>R</original>
    <variation>A</variation>
    <location>
        <position position="207"/>
    </location>
</feature>
<feature type="sequence conflict" description="In Ref. 4; AAM66112." evidence="6" ref="4">
    <original>G</original>
    <variation>A</variation>
    <location>
        <position position="5"/>
    </location>
</feature>